<dbReference type="EMBL" id="AE013599">
    <property type="protein sequence ID" value="AAM68752.1"/>
    <property type="molecule type" value="Genomic_DNA"/>
</dbReference>
<dbReference type="EMBL" id="AY061830">
    <property type="protein sequence ID" value="AAL27641.1"/>
    <property type="molecule type" value="mRNA"/>
</dbReference>
<dbReference type="EMBL" id="AY150713">
    <property type="protein sequence ID" value="AAN78363.1"/>
    <property type="molecule type" value="Genomic_DNA"/>
</dbReference>
<dbReference type="EMBL" id="AY150714">
    <property type="protein sequence ID" value="AAN78364.1"/>
    <property type="molecule type" value="Genomic_DNA"/>
</dbReference>
<dbReference type="EMBL" id="AY150715">
    <property type="protein sequence ID" value="AAN78365.1"/>
    <property type="molecule type" value="Genomic_DNA"/>
</dbReference>
<dbReference type="EMBL" id="AY150716">
    <property type="protein sequence ID" value="AAN78366.1"/>
    <property type="molecule type" value="Genomic_DNA"/>
</dbReference>
<dbReference type="EMBL" id="AY150717">
    <property type="protein sequence ID" value="AAN78367.1"/>
    <property type="molecule type" value="Genomic_DNA"/>
</dbReference>
<dbReference type="EMBL" id="AY150718">
    <property type="protein sequence ID" value="AAN78368.1"/>
    <property type="molecule type" value="Genomic_DNA"/>
</dbReference>
<dbReference type="EMBL" id="AY150719">
    <property type="protein sequence ID" value="AAN78369.1"/>
    <property type="molecule type" value="Genomic_DNA"/>
</dbReference>
<dbReference type="EMBL" id="AY150720">
    <property type="protein sequence ID" value="AAN78370.1"/>
    <property type="molecule type" value="Genomic_DNA"/>
</dbReference>
<dbReference type="EMBL" id="AY150721">
    <property type="protein sequence ID" value="AAN78371.1"/>
    <property type="molecule type" value="Genomic_DNA"/>
</dbReference>
<dbReference type="EMBL" id="AY150722">
    <property type="protein sequence ID" value="AAN78372.1"/>
    <property type="molecule type" value="Genomic_DNA"/>
</dbReference>
<dbReference type="EMBL" id="AY150723">
    <property type="protein sequence ID" value="AAN78373.1"/>
    <property type="molecule type" value="Genomic_DNA"/>
</dbReference>
<dbReference type="EMBL" id="AY150724">
    <property type="protein sequence ID" value="AAN78374.1"/>
    <property type="molecule type" value="Genomic_DNA"/>
</dbReference>
<dbReference type="EMBL" id="AY150725">
    <property type="protein sequence ID" value="AAN78375.1"/>
    <property type="molecule type" value="Genomic_DNA"/>
</dbReference>
<dbReference type="EMBL" id="AY150726">
    <property type="protein sequence ID" value="AAN78376.1"/>
    <property type="molecule type" value="Genomic_DNA"/>
</dbReference>
<dbReference type="EMBL" id="AY150727">
    <property type="protein sequence ID" value="AAN78377.1"/>
    <property type="molecule type" value="Genomic_DNA"/>
</dbReference>
<dbReference type="EMBL" id="AY150728">
    <property type="protein sequence ID" value="AAN78378.1"/>
    <property type="molecule type" value="Genomic_DNA"/>
</dbReference>
<dbReference type="RefSeq" id="NP_610616.1">
    <property type="nucleotide sequence ID" value="NM_136772.3"/>
</dbReference>
<dbReference type="SMR" id="Q7KR04"/>
<dbReference type="BioGRID" id="61949">
    <property type="interactions" value="22"/>
</dbReference>
<dbReference type="FunCoup" id="Q7KR04">
    <property type="interactions" value="1122"/>
</dbReference>
<dbReference type="IntAct" id="Q7KR04">
    <property type="interactions" value="26"/>
</dbReference>
<dbReference type="STRING" id="7227.FBpp0087321"/>
<dbReference type="PaxDb" id="7227-FBpp0087321"/>
<dbReference type="DNASU" id="36142"/>
<dbReference type="EnsemblMetazoa" id="FBtr0088226">
    <property type="protein sequence ID" value="FBpp0087321"/>
    <property type="gene ID" value="FBgn0033555"/>
</dbReference>
<dbReference type="GeneID" id="36142"/>
<dbReference type="KEGG" id="dme:Dmel_CG12324"/>
<dbReference type="AGR" id="FB:FBgn0033555"/>
<dbReference type="CTD" id="36142"/>
<dbReference type="FlyBase" id="FBgn0033555">
    <property type="gene designation" value="RpS15Ab"/>
</dbReference>
<dbReference type="VEuPathDB" id="VectorBase:FBgn0033555"/>
<dbReference type="eggNOG" id="KOG1754">
    <property type="taxonomic scope" value="Eukaryota"/>
</dbReference>
<dbReference type="GeneTree" id="ENSGT00950000183198"/>
<dbReference type="HOGENOM" id="CLU_098428_1_1_1"/>
<dbReference type="InParanoid" id="Q7KR04"/>
<dbReference type="OMA" id="IGDMEKW"/>
<dbReference type="OrthoDB" id="10250260at2759"/>
<dbReference type="PhylomeDB" id="Q7KR04"/>
<dbReference type="SignaLink" id="Q7KR04"/>
<dbReference type="BioGRID-ORCS" id="36142">
    <property type="hits" value="0 hits in 1 CRISPR screen"/>
</dbReference>
<dbReference type="GenomeRNAi" id="36142"/>
<dbReference type="PRO" id="PR:Q7KR04"/>
<dbReference type="Proteomes" id="UP000000803">
    <property type="component" value="Chromosome 2R"/>
</dbReference>
<dbReference type="Bgee" id="FBgn0033555">
    <property type="expression patterns" value="Expressed in spermatid in male reproductive gland and 114 other cell types or tissues"/>
</dbReference>
<dbReference type="GO" id="GO:0022627">
    <property type="term" value="C:cytosolic small ribosomal subunit"/>
    <property type="evidence" value="ECO:0000318"/>
    <property type="project" value="GO_Central"/>
</dbReference>
<dbReference type="GO" id="GO:0003735">
    <property type="term" value="F:structural constituent of ribosome"/>
    <property type="evidence" value="ECO:0000318"/>
    <property type="project" value="GO_Central"/>
</dbReference>
<dbReference type="GO" id="GO:0002181">
    <property type="term" value="P:cytoplasmic translation"/>
    <property type="evidence" value="ECO:0000304"/>
    <property type="project" value="FlyBase"/>
</dbReference>
<dbReference type="FunFam" id="3.30.1370.30:FF:000001">
    <property type="entry name" value="40S ribosomal protein S15a"/>
    <property type="match status" value="1"/>
</dbReference>
<dbReference type="FunFam" id="3.30.1490.10:FF:000002">
    <property type="entry name" value="40S ribosomal protein S15a"/>
    <property type="match status" value="1"/>
</dbReference>
<dbReference type="Gene3D" id="3.30.1370.30">
    <property type="match status" value="1"/>
</dbReference>
<dbReference type="Gene3D" id="3.30.1490.10">
    <property type="match status" value="1"/>
</dbReference>
<dbReference type="InterPro" id="IPR000630">
    <property type="entry name" value="Ribosomal_uS8"/>
</dbReference>
<dbReference type="InterPro" id="IPR047863">
    <property type="entry name" value="Ribosomal_uS8_CS"/>
</dbReference>
<dbReference type="InterPro" id="IPR035987">
    <property type="entry name" value="Ribosomal_uS8_sf"/>
</dbReference>
<dbReference type="NCBIfam" id="NF003115">
    <property type="entry name" value="PRK04034.1"/>
    <property type="match status" value="1"/>
</dbReference>
<dbReference type="PANTHER" id="PTHR11758">
    <property type="entry name" value="40S RIBOSOMAL PROTEIN S15A"/>
    <property type="match status" value="1"/>
</dbReference>
<dbReference type="Pfam" id="PF00410">
    <property type="entry name" value="Ribosomal_S8"/>
    <property type="match status" value="1"/>
</dbReference>
<dbReference type="SUPFAM" id="SSF56047">
    <property type="entry name" value="Ribosomal protein S8"/>
    <property type="match status" value="1"/>
</dbReference>
<dbReference type="PROSITE" id="PS00053">
    <property type="entry name" value="RIBOSOMAL_S8"/>
    <property type="match status" value="1"/>
</dbReference>
<comment type="similarity">
    <text evidence="2">Belongs to the universal ribosomal protein uS8 family.</text>
</comment>
<keyword id="KW-1185">Reference proteome</keyword>
<keyword id="KW-0687">Ribonucleoprotein</keyword>
<keyword id="KW-0689">Ribosomal protein</keyword>
<sequence>MVRMNVLADALKCINNAEKRGKRQVLLRPCSKVIIKFLTVMMKHGYIGEFEIVEDHRAGKIVVNLTGRLNKCGVISPRFDAPINDIEKWTNNLLPSRQFGYVVLTTSGGIMDHEEARRKHLGGKILGFFF</sequence>
<organism>
    <name type="scientific">Drosophila melanogaster</name>
    <name type="common">Fruit fly</name>
    <dbReference type="NCBI Taxonomy" id="7227"/>
    <lineage>
        <taxon>Eukaryota</taxon>
        <taxon>Metazoa</taxon>
        <taxon>Ecdysozoa</taxon>
        <taxon>Arthropoda</taxon>
        <taxon>Hexapoda</taxon>
        <taxon>Insecta</taxon>
        <taxon>Pterygota</taxon>
        <taxon>Neoptera</taxon>
        <taxon>Endopterygota</taxon>
        <taxon>Diptera</taxon>
        <taxon>Brachycera</taxon>
        <taxon>Muscomorpha</taxon>
        <taxon>Ephydroidea</taxon>
        <taxon>Drosophilidae</taxon>
        <taxon>Drosophila</taxon>
        <taxon>Sophophora</taxon>
    </lineage>
</organism>
<evidence type="ECO:0000250" key="1"/>
<evidence type="ECO:0000305" key="2"/>
<accession>Q7KR04</accession>
<accession>Q8I8H7</accession>
<protein>
    <recommendedName>
        <fullName evidence="2">Small ribosomal subunit protein uS8B</fullName>
    </recommendedName>
    <alternativeName>
        <fullName>40S ribosomal protein S15Ab</fullName>
    </alternativeName>
</protein>
<feature type="initiator methionine" description="Removed" evidence="1">
    <location>
        <position position="1"/>
    </location>
</feature>
<feature type="chain" id="PRO_0000126611" description="Small ribosomal subunit protein uS8B">
    <location>
        <begin position="2"/>
        <end position="130"/>
    </location>
</feature>
<feature type="sequence variant" description="In strain: LA79.">
    <original>V</original>
    <variation>I</variation>
    <location>
        <position position="6"/>
    </location>
</feature>
<proteinExistence type="evidence at transcript level"/>
<reference key="1">
    <citation type="journal article" date="2002" name="Genome Res.">
        <title>Retroposed new genes out of the X in Drosophila.</title>
        <authorList>
            <person name="Betran E."/>
            <person name="Thornton K."/>
            <person name="Long M."/>
        </authorList>
    </citation>
    <scope>NUCLEOTIDE SEQUENCE [GENOMIC DNA]</scope>
    <source>
        <strain>253.27</strain>
        <strain>Closs19</strain>
        <strain>Closs3</strain>
        <strain>HG84</strain>
        <strain>LA79</strain>
        <strain>north34</strain>
        <strain>north7_13</strain>
        <strain>OK17</strain>
        <strain>yep10</strain>
        <strain>yep25</strain>
        <strain>yep7</strain>
        <strain>Z</strain>
    </source>
</reference>
<reference key="2">
    <citation type="journal article" date="2000" name="Science">
        <title>The genome sequence of Drosophila melanogaster.</title>
        <authorList>
            <person name="Adams M.D."/>
            <person name="Celniker S.E."/>
            <person name="Holt R.A."/>
            <person name="Evans C.A."/>
            <person name="Gocayne J.D."/>
            <person name="Amanatides P.G."/>
            <person name="Scherer S.E."/>
            <person name="Li P.W."/>
            <person name="Hoskins R.A."/>
            <person name="Galle R.F."/>
            <person name="George R.A."/>
            <person name="Lewis S.E."/>
            <person name="Richards S."/>
            <person name="Ashburner M."/>
            <person name="Henderson S.N."/>
            <person name="Sutton G.G."/>
            <person name="Wortman J.R."/>
            <person name="Yandell M.D."/>
            <person name="Zhang Q."/>
            <person name="Chen L.X."/>
            <person name="Brandon R.C."/>
            <person name="Rogers Y.-H.C."/>
            <person name="Blazej R.G."/>
            <person name="Champe M."/>
            <person name="Pfeiffer B.D."/>
            <person name="Wan K.H."/>
            <person name="Doyle C."/>
            <person name="Baxter E.G."/>
            <person name="Helt G."/>
            <person name="Nelson C.R."/>
            <person name="Miklos G.L.G."/>
            <person name="Abril J.F."/>
            <person name="Agbayani A."/>
            <person name="An H.-J."/>
            <person name="Andrews-Pfannkoch C."/>
            <person name="Baldwin D."/>
            <person name="Ballew R.M."/>
            <person name="Basu A."/>
            <person name="Baxendale J."/>
            <person name="Bayraktaroglu L."/>
            <person name="Beasley E.M."/>
            <person name="Beeson K.Y."/>
            <person name="Benos P.V."/>
            <person name="Berman B.P."/>
            <person name="Bhandari D."/>
            <person name="Bolshakov S."/>
            <person name="Borkova D."/>
            <person name="Botchan M.R."/>
            <person name="Bouck J."/>
            <person name="Brokstein P."/>
            <person name="Brottier P."/>
            <person name="Burtis K.C."/>
            <person name="Busam D.A."/>
            <person name="Butler H."/>
            <person name="Cadieu E."/>
            <person name="Center A."/>
            <person name="Chandra I."/>
            <person name="Cherry J.M."/>
            <person name="Cawley S."/>
            <person name="Dahlke C."/>
            <person name="Davenport L.B."/>
            <person name="Davies P."/>
            <person name="de Pablos B."/>
            <person name="Delcher A."/>
            <person name="Deng Z."/>
            <person name="Mays A.D."/>
            <person name="Dew I."/>
            <person name="Dietz S.M."/>
            <person name="Dodson K."/>
            <person name="Doup L.E."/>
            <person name="Downes M."/>
            <person name="Dugan-Rocha S."/>
            <person name="Dunkov B.C."/>
            <person name="Dunn P."/>
            <person name="Durbin K.J."/>
            <person name="Evangelista C.C."/>
            <person name="Ferraz C."/>
            <person name="Ferriera S."/>
            <person name="Fleischmann W."/>
            <person name="Fosler C."/>
            <person name="Gabrielian A.E."/>
            <person name="Garg N.S."/>
            <person name="Gelbart W.M."/>
            <person name="Glasser K."/>
            <person name="Glodek A."/>
            <person name="Gong F."/>
            <person name="Gorrell J.H."/>
            <person name="Gu Z."/>
            <person name="Guan P."/>
            <person name="Harris M."/>
            <person name="Harris N.L."/>
            <person name="Harvey D.A."/>
            <person name="Heiman T.J."/>
            <person name="Hernandez J.R."/>
            <person name="Houck J."/>
            <person name="Hostin D."/>
            <person name="Houston K.A."/>
            <person name="Howland T.J."/>
            <person name="Wei M.-H."/>
            <person name="Ibegwam C."/>
            <person name="Jalali M."/>
            <person name="Kalush F."/>
            <person name="Karpen G.H."/>
            <person name="Ke Z."/>
            <person name="Kennison J.A."/>
            <person name="Ketchum K.A."/>
            <person name="Kimmel B.E."/>
            <person name="Kodira C.D."/>
            <person name="Kraft C.L."/>
            <person name="Kravitz S."/>
            <person name="Kulp D."/>
            <person name="Lai Z."/>
            <person name="Lasko P."/>
            <person name="Lei Y."/>
            <person name="Levitsky A.A."/>
            <person name="Li J.H."/>
            <person name="Li Z."/>
            <person name="Liang Y."/>
            <person name="Lin X."/>
            <person name="Liu X."/>
            <person name="Mattei B."/>
            <person name="McIntosh T.C."/>
            <person name="McLeod M.P."/>
            <person name="McPherson D."/>
            <person name="Merkulov G."/>
            <person name="Milshina N.V."/>
            <person name="Mobarry C."/>
            <person name="Morris J."/>
            <person name="Moshrefi A."/>
            <person name="Mount S.M."/>
            <person name="Moy M."/>
            <person name="Murphy B."/>
            <person name="Murphy L."/>
            <person name="Muzny D.M."/>
            <person name="Nelson D.L."/>
            <person name="Nelson D.R."/>
            <person name="Nelson K.A."/>
            <person name="Nixon K."/>
            <person name="Nusskern D.R."/>
            <person name="Pacleb J.M."/>
            <person name="Palazzolo M."/>
            <person name="Pittman G.S."/>
            <person name="Pan S."/>
            <person name="Pollard J."/>
            <person name="Puri V."/>
            <person name="Reese M.G."/>
            <person name="Reinert K."/>
            <person name="Remington K."/>
            <person name="Saunders R.D.C."/>
            <person name="Scheeler F."/>
            <person name="Shen H."/>
            <person name="Shue B.C."/>
            <person name="Siden-Kiamos I."/>
            <person name="Simpson M."/>
            <person name="Skupski M.P."/>
            <person name="Smith T.J."/>
            <person name="Spier E."/>
            <person name="Spradling A.C."/>
            <person name="Stapleton M."/>
            <person name="Strong R."/>
            <person name="Sun E."/>
            <person name="Svirskas R."/>
            <person name="Tector C."/>
            <person name="Turner R."/>
            <person name="Venter E."/>
            <person name="Wang A.H."/>
            <person name="Wang X."/>
            <person name="Wang Z.-Y."/>
            <person name="Wassarman D.A."/>
            <person name="Weinstock G.M."/>
            <person name="Weissenbach J."/>
            <person name="Williams S.M."/>
            <person name="Woodage T."/>
            <person name="Worley K.C."/>
            <person name="Wu D."/>
            <person name="Yang S."/>
            <person name="Yao Q.A."/>
            <person name="Ye J."/>
            <person name="Yeh R.-F."/>
            <person name="Zaveri J.S."/>
            <person name="Zhan M."/>
            <person name="Zhang G."/>
            <person name="Zhao Q."/>
            <person name="Zheng L."/>
            <person name="Zheng X.H."/>
            <person name="Zhong F.N."/>
            <person name="Zhong W."/>
            <person name="Zhou X."/>
            <person name="Zhu S.C."/>
            <person name="Zhu X."/>
            <person name="Smith H.O."/>
            <person name="Gibbs R.A."/>
            <person name="Myers E.W."/>
            <person name="Rubin G.M."/>
            <person name="Venter J.C."/>
        </authorList>
    </citation>
    <scope>NUCLEOTIDE SEQUENCE [LARGE SCALE GENOMIC DNA]</scope>
    <source>
        <strain>Berkeley</strain>
    </source>
</reference>
<reference key="3">
    <citation type="journal article" date="2002" name="Genome Biol.">
        <title>Annotation of the Drosophila melanogaster euchromatic genome: a systematic review.</title>
        <authorList>
            <person name="Misra S."/>
            <person name="Crosby M.A."/>
            <person name="Mungall C.J."/>
            <person name="Matthews B.B."/>
            <person name="Campbell K.S."/>
            <person name="Hradecky P."/>
            <person name="Huang Y."/>
            <person name="Kaminker J.S."/>
            <person name="Millburn G.H."/>
            <person name="Prochnik S.E."/>
            <person name="Smith C.D."/>
            <person name="Tupy J.L."/>
            <person name="Whitfield E.J."/>
            <person name="Bayraktaroglu L."/>
            <person name="Berman B.P."/>
            <person name="Bettencourt B.R."/>
            <person name="Celniker S.E."/>
            <person name="de Grey A.D.N.J."/>
            <person name="Drysdale R.A."/>
            <person name="Harris N.L."/>
            <person name="Richter J."/>
            <person name="Russo S."/>
            <person name="Schroeder A.J."/>
            <person name="Shu S.Q."/>
            <person name="Stapleton M."/>
            <person name="Yamada C."/>
            <person name="Ashburner M."/>
            <person name="Gelbart W.M."/>
            <person name="Rubin G.M."/>
            <person name="Lewis S.E."/>
        </authorList>
    </citation>
    <scope>GENOME REANNOTATION</scope>
    <source>
        <strain>Berkeley</strain>
    </source>
</reference>
<reference key="4">
    <citation type="journal article" date="2002" name="Genome Biol.">
        <title>A Drosophila full-length cDNA resource.</title>
        <authorList>
            <person name="Stapleton M."/>
            <person name="Carlson J.W."/>
            <person name="Brokstein P."/>
            <person name="Yu C."/>
            <person name="Champe M."/>
            <person name="George R.A."/>
            <person name="Guarin H."/>
            <person name="Kronmiller B."/>
            <person name="Pacleb J.M."/>
            <person name="Park S."/>
            <person name="Wan K.H."/>
            <person name="Rubin G.M."/>
            <person name="Celniker S.E."/>
        </authorList>
    </citation>
    <scope>NUCLEOTIDE SEQUENCE [LARGE SCALE MRNA]</scope>
    <source>
        <strain>Berkeley</strain>
        <tissue>Embryo</tissue>
    </source>
</reference>
<gene>
    <name type="primary">RpS15Ab</name>
    <name type="synonym">RpS15A</name>
    <name type="ORF">CG12324</name>
</gene>
<name>RS15B_DROME</name>